<evidence type="ECO:0000256" key="1">
    <source>
        <dbReference type="SAM" id="MobiDB-lite"/>
    </source>
</evidence>
<sequence length="279" mass="31461">MNNEEQKLIENLFSRLYKAESDFPNRDKNAEQLINDLLRKQPSSSYYMTQTILVQEMIIEKLNAKILELEKNLSMNEKQTKHGSFGFLSGLFKSKKKEIDACNQGNKAGNHKDDISKRPIMDCLNNNVGKTTSVLGRETIYNTSNNSMSGFLSGSLQTAAGVAGGMVMANLLMNLFQHKRPEEEMIDQISHNPTPVSADSDDLVNNNMNNDKHDVASSDYINDEHEYGEHVKNDHQLHDSPLCSDVSDSTSNNNYDESLNFSNDNNNSSFNDFDDDNFI</sequence>
<keyword id="KW-1185">Reference proteome</keyword>
<protein>
    <recommendedName>
        <fullName>Uncharacterized protein bbp_170</fullName>
    </recommendedName>
    <alternativeName>
        <fullName>yba2</fullName>
    </alternativeName>
</protein>
<name>Y170_BUCBP</name>
<proteinExistence type="predicted"/>
<organism>
    <name type="scientific">Buchnera aphidicola subsp. Baizongia pistaciae (strain Bp)</name>
    <dbReference type="NCBI Taxonomy" id="224915"/>
    <lineage>
        <taxon>Bacteria</taxon>
        <taxon>Pseudomonadati</taxon>
        <taxon>Pseudomonadota</taxon>
        <taxon>Gammaproteobacteria</taxon>
        <taxon>Enterobacterales</taxon>
        <taxon>Erwiniaceae</taxon>
        <taxon>Buchnera</taxon>
    </lineage>
</organism>
<feature type="chain" id="PRO_0000216251" description="Uncharacterized protein bbp_170">
    <location>
        <begin position="1"/>
        <end position="279"/>
    </location>
</feature>
<feature type="region of interest" description="Disordered" evidence="1">
    <location>
        <begin position="233"/>
        <end position="279"/>
    </location>
</feature>
<feature type="compositionally biased region" description="Polar residues" evidence="1">
    <location>
        <begin position="246"/>
        <end position="259"/>
    </location>
</feature>
<feature type="compositionally biased region" description="Low complexity" evidence="1">
    <location>
        <begin position="260"/>
        <end position="271"/>
    </location>
</feature>
<accession>Q89AS2</accession>
<reference key="1">
    <citation type="journal article" date="2003" name="Proc. Natl. Acad. Sci. U.S.A.">
        <title>Reductive genome evolution in Buchnera aphidicola.</title>
        <authorList>
            <person name="van Ham R.C.H.J."/>
            <person name="Kamerbeek J."/>
            <person name="Palacios C."/>
            <person name="Rausell C."/>
            <person name="Abascal F."/>
            <person name="Bastolla U."/>
            <person name="Fernandez J.M."/>
            <person name="Jimenez L."/>
            <person name="Postigo M."/>
            <person name="Silva F.J."/>
            <person name="Tamames J."/>
            <person name="Viguera E."/>
            <person name="Latorre A."/>
            <person name="Valencia A."/>
            <person name="Moran F."/>
            <person name="Moya A."/>
        </authorList>
    </citation>
    <scope>NUCLEOTIDE SEQUENCE [LARGE SCALE GENOMIC DNA]</scope>
    <source>
        <strain>Bp</strain>
    </source>
</reference>
<gene>
    <name type="ordered locus">bbp_170</name>
</gene>
<dbReference type="EMBL" id="AE016826">
    <property type="protein sequence ID" value="AAO26903.1"/>
    <property type="molecule type" value="Genomic_DNA"/>
</dbReference>
<dbReference type="RefSeq" id="WP_011091304.1">
    <property type="nucleotide sequence ID" value="NC_004545.1"/>
</dbReference>
<dbReference type="SMR" id="Q89AS2"/>
<dbReference type="STRING" id="224915.bbp_170"/>
<dbReference type="KEGG" id="bab:bbp_170"/>
<dbReference type="eggNOG" id="COG3416">
    <property type="taxonomic scope" value="Bacteria"/>
</dbReference>
<dbReference type="HOGENOM" id="CLU_082335_1_0_6"/>
<dbReference type="OrthoDB" id="122910at2"/>
<dbReference type="Proteomes" id="UP000000601">
    <property type="component" value="Chromosome"/>
</dbReference>
<dbReference type="InterPro" id="IPR018648">
    <property type="entry name" value="DUF2076"/>
</dbReference>
<dbReference type="Pfam" id="PF09849">
    <property type="entry name" value="DUF2076"/>
    <property type="match status" value="1"/>
</dbReference>